<protein>
    <recommendedName>
        <fullName evidence="1">Putative septation protein SpoVG</fullName>
    </recommendedName>
</protein>
<accession>A4XGE7</accession>
<feature type="chain" id="PRO_1000062424" description="Putative septation protein SpoVG">
    <location>
        <begin position="1"/>
        <end position="88"/>
    </location>
</feature>
<comment type="function">
    <text evidence="1">Could be involved in septation.</text>
</comment>
<comment type="similarity">
    <text evidence="1">Belongs to the SpoVG family.</text>
</comment>
<sequence>MQVTDVRIRKITNEGRMKAIVSVTFDNCFVVHDIKIIEGQNGLFIAMPSRKTPEGEFKDIAHPINQEMRDMVQKAVIEKYEAVISAGE</sequence>
<name>SP5G_CALS8</name>
<reference key="1">
    <citation type="submission" date="2007-04" db="EMBL/GenBank/DDBJ databases">
        <title>Genome sequence of the thermophilic hydrogen-producing bacterium Caldicellulosiruptor saccharolyticus DSM 8903.</title>
        <authorList>
            <person name="Copeland A."/>
            <person name="Lucas S."/>
            <person name="Lapidus A."/>
            <person name="Barry K."/>
            <person name="Detter J.C."/>
            <person name="Glavina del Rio T."/>
            <person name="Hammon N."/>
            <person name="Israni S."/>
            <person name="Dalin E."/>
            <person name="Tice H."/>
            <person name="Pitluck S."/>
            <person name="Kiss H."/>
            <person name="Brettin T."/>
            <person name="Bruce D."/>
            <person name="Han C."/>
            <person name="Schmutz J."/>
            <person name="Larimer F."/>
            <person name="Land M."/>
            <person name="Hauser L."/>
            <person name="Kyrpides N."/>
            <person name="Lykidis A."/>
            <person name="van de Werken H.J.G."/>
            <person name="Verhaart M.R.A."/>
            <person name="VanFossen A.L."/>
            <person name="Lewis D.L."/>
            <person name="Nichols J.D."/>
            <person name="Goorissen H.P."/>
            <person name="van Niel E.W.J."/>
            <person name="Stams F.J.M."/>
            <person name="Willquist K.U."/>
            <person name="Ward D.E."/>
            <person name="van der Oost J."/>
            <person name="Kelly R.M."/>
            <person name="Kengen S.M.W."/>
            <person name="Richardson P."/>
        </authorList>
    </citation>
    <scope>NUCLEOTIDE SEQUENCE [LARGE SCALE GENOMIC DNA]</scope>
    <source>
        <strain>ATCC 43494 / DSM 8903 / Tp8T 6331</strain>
    </source>
</reference>
<proteinExistence type="inferred from homology"/>
<organism>
    <name type="scientific">Caldicellulosiruptor saccharolyticus (strain ATCC 43494 / DSM 8903 / Tp8T 6331)</name>
    <dbReference type="NCBI Taxonomy" id="351627"/>
    <lineage>
        <taxon>Bacteria</taxon>
        <taxon>Bacillati</taxon>
        <taxon>Bacillota</taxon>
        <taxon>Bacillota incertae sedis</taxon>
        <taxon>Caldicellulosiruptorales</taxon>
        <taxon>Caldicellulosiruptoraceae</taxon>
        <taxon>Caldicellulosiruptor</taxon>
    </lineage>
</organism>
<keyword id="KW-0131">Cell cycle</keyword>
<keyword id="KW-0132">Cell division</keyword>
<keyword id="KW-0717">Septation</keyword>
<dbReference type="EMBL" id="CP000679">
    <property type="protein sequence ID" value="ABP65982.1"/>
    <property type="molecule type" value="Genomic_DNA"/>
</dbReference>
<dbReference type="RefSeq" id="WP_011915937.1">
    <property type="nucleotide sequence ID" value="NC_009437.1"/>
</dbReference>
<dbReference type="SMR" id="A4XGE7"/>
<dbReference type="STRING" id="351627.Csac_0341"/>
<dbReference type="KEGG" id="csc:Csac_0341"/>
<dbReference type="eggNOG" id="COG2088">
    <property type="taxonomic scope" value="Bacteria"/>
</dbReference>
<dbReference type="HOGENOM" id="CLU_103669_2_0_9"/>
<dbReference type="OrthoDB" id="9796286at2"/>
<dbReference type="Proteomes" id="UP000000256">
    <property type="component" value="Chromosome"/>
</dbReference>
<dbReference type="GO" id="GO:0000917">
    <property type="term" value="P:division septum assembly"/>
    <property type="evidence" value="ECO:0007669"/>
    <property type="project" value="UniProtKB-KW"/>
</dbReference>
<dbReference type="GO" id="GO:0030435">
    <property type="term" value="P:sporulation resulting in formation of a cellular spore"/>
    <property type="evidence" value="ECO:0007669"/>
    <property type="project" value="InterPro"/>
</dbReference>
<dbReference type="Gene3D" id="3.30.1120.40">
    <property type="entry name" value="Stage V sporulation protein G"/>
    <property type="match status" value="1"/>
</dbReference>
<dbReference type="HAMAP" id="MF_00819">
    <property type="entry name" value="SpoVG"/>
    <property type="match status" value="1"/>
</dbReference>
<dbReference type="InterPro" id="IPR007170">
    <property type="entry name" value="SpoVG"/>
</dbReference>
<dbReference type="InterPro" id="IPR036751">
    <property type="entry name" value="SpoVG_sf"/>
</dbReference>
<dbReference type="NCBIfam" id="NF009749">
    <property type="entry name" value="PRK13259.1"/>
    <property type="match status" value="1"/>
</dbReference>
<dbReference type="PANTHER" id="PTHR38429">
    <property type="entry name" value="SEPTATION PROTEIN SPOVG-RELATED"/>
    <property type="match status" value="1"/>
</dbReference>
<dbReference type="PANTHER" id="PTHR38429:SF1">
    <property type="entry name" value="SEPTATION PROTEIN SPOVG-RELATED"/>
    <property type="match status" value="1"/>
</dbReference>
<dbReference type="Pfam" id="PF04026">
    <property type="entry name" value="SpoVG"/>
    <property type="match status" value="1"/>
</dbReference>
<dbReference type="SUPFAM" id="SSF160537">
    <property type="entry name" value="SpoVG-like"/>
    <property type="match status" value="1"/>
</dbReference>
<gene>
    <name evidence="1" type="primary">spoVG</name>
    <name type="ordered locus">Csac_0341</name>
</gene>
<evidence type="ECO:0000255" key="1">
    <source>
        <dbReference type="HAMAP-Rule" id="MF_00819"/>
    </source>
</evidence>